<feature type="chain" id="PRO_0000334569" description="Serpin-Z1B">
    <location>
        <begin position="1"/>
        <end position="399"/>
    </location>
</feature>
<feature type="region of interest" description="RCL">
    <location>
        <begin position="344"/>
        <end position="368"/>
    </location>
</feature>
<feature type="site" description="Reactive bond">
    <location>
        <begin position="358"/>
        <end position="359"/>
    </location>
</feature>
<comment type="function">
    <text evidence="2">Inhibits chymotrypsin and cathepsin G in vitro.</text>
</comment>
<comment type="domain">
    <text evidence="1">The reactive center loop (RCL) extends out from the body of the protein and directs binding to the target protease. The protease cleaves the serpin at the reactive site within the RCL, establishing a covalent linkage between the carboxyl group of the serpin reactive site and the serine hydroxyl of the protease. The resulting inactive serpin-protease complex is highly stable (By similarity).</text>
</comment>
<comment type="similarity">
    <text evidence="3">Belongs to the serpin family.</text>
</comment>
<accession>P93693</accession>
<evidence type="ECO:0000250" key="1"/>
<evidence type="ECO:0000269" key="2">
    <source>
    </source>
</evidence>
<evidence type="ECO:0000305" key="3"/>
<proteinExistence type="evidence at protein level"/>
<name>SPZ1B_WHEAT</name>
<keyword id="KW-0903">Direct protein sequencing</keyword>
<keyword id="KW-0646">Protease inhibitor</keyword>
<keyword id="KW-1185">Reference proteome</keyword>
<keyword id="KW-0722">Serine protease inhibitor</keyword>
<dbReference type="EMBL" id="Y11485">
    <property type="protein sequence ID" value="CAA72273.1"/>
    <property type="molecule type" value="mRNA"/>
</dbReference>
<dbReference type="PIR" id="T06488">
    <property type="entry name" value="T06488"/>
</dbReference>
<dbReference type="SMR" id="P93693"/>
<dbReference type="STRING" id="4565.P93693"/>
<dbReference type="Allergome" id="5724">
    <property type="allergen name" value="Tri a 33"/>
</dbReference>
<dbReference type="MEROPS" id="I04.032"/>
<dbReference type="PaxDb" id="4565-Traes_5DL_D4B0422E9.1"/>
<dbReference type="eggNOG" id="KOG2392">
    <property type="taxonomic scope" value="Eukaryota"/>
</dbReference>
<dbReference type="Proteomes" id="UP000019116">
    <property type="component" value="Unplaced"/>
</dbReference>
<dbReference type="ExpressionAtlas" id="P93693">
    <property type="expression patterns" value="baseline"/>
</dbReference>
<dbReference type="GO" id="GO:0005615">
    <property type="term" value="C:extracellular space"/>
    <property type="evidence" value="ECO:0000318"/>
    <property type="project" value="GO_Central"/>
</dbReference>
<dbReference type="GO" id="GO:0004867">
    <property type="term" value="F:serine-type endopeptidase inhibitor activity"/>
    <property type="evidence" value="ECO:0007669"/>
    <property type="project" value="UniProtKB-KW"/>
</dbReference>
<dbReference type="CDD" id="cd02043">
    <property type="entry name" value="serpinP_plants"/>
    <property type="match status" value="1"/>
</dbReference>
<dbReference type="Gene3D" id="2.30.39.10">
    <property type="entry name" value="Alpha-1-antitrypsin, domain 1"/>
    <property type="match status" value="1"/>
</dbReference>
<dbReference type="Gene3D" id="3.30.497.10">
    <property type="entry name" value="Antithrombin, subunit I, domain 2"/>
    <property type="match status" value="1"/>
</dbReference>
<dbReference type="InterPro" id="IPR023795">
    <property type="entry name" value="Serpin_CS"/>
</dbReference>
<dbReference type="InterPro" id="IPR023796">
    <property type="entry name" value="Serpin_dom"/>
</dbReference>
<dbReference type="InterPro" id="IPR000215">
    <property type="entry name" value="Serpin_fam"/>
</dbReference>
<dbReference type="InterPro" id="IPR036186">
    <property type="entry name" value="Serpin_sf"/>
</dbReference>
<dbReference type="InterPro" id="IPR042178">
    <property type="entry name" value="Serpin_sf_1"/>
</dbReference>
<dbReference type="InterPro" id="IPR042185">
    <property type="entry name" value="Serpin_sf_2"/>
</dbReference>
<dbReference type="PANTHER" id="PTHR11461">
    <property type="entry name" value="SERINE PROTEASE INHIBITOR, SERPIN"/>
    <property type="match status" value="1"/>
</dbReference>
<dbReference type="PANTHER" id="PTHR11461:SF317">
    <property type="entry name" value="SERPIN-Z1C"/>
    <property type="match status" value="1"/>
</dbReference>
<dbReference type="Pfam" id="PF00079">
    <property type="entry name" value="Serpin"/>
    <property type="match status" value="1"/>
</dbReference>
<dbReference type="SMART" id="SM00093">
    <property type="entry name" value="SERPIN"/>
    <property type="match status" value="1"/>
</dbReference>
<dbReference type="SUPFAM" id="SSF56574">
    <property type="entry name" value="Serpins"/>
    <property type="match status" value="1"/>
</dbReference>
<dbReference type="PROSITE" id="PS00284">
    <property type="entry name" value="SERPIN"/>
    <property type="match status" value="1"/>
</dbReference>
<reference key="1">
    <citation type="journal article" date="2000" name="J. Biol. Chem.">
        <title>Inhibitory serpins from wheat grain with reactive centers resembling glutamine-rich repeats of prolamin storage proteins. Cloning and characterization of five major molecular forms.</title>
        <authorList>
            <person name="Oestergaard H."/>
            <person name="Rasmussen S.K."/>
            <person name="Roberts T.H."/>
            <person name="Hejgaard J."/>
        </authorList>
    </citation>
    <scope>NUCLEOTIDE SEQUENCE [MRNA]</scope>
    <scope>PARTIAL PROTEIN SEQUENCE</scope>
    <scope>FUNCTION</scope>
    <source>
        <strain>cv. Chinese Spring</strain>
        <tissue>Grain</tissue>
    </source>
</reference>
<protein>
    <recommendedName>
        <fullName>Serpin-Z1B</fullName>
    </recommendedName>
    <alternativeName>
        <fullName>TriaeZ1b</fullName>
    </alternativeName>
    <alternativeName>
        <fullName>WSZ1b</fullName>
    </alternativeName>
    <alternativeName>
        <fullName>WZS2</fullName>
    </alternativeName>
</protein>
<sequence length="399" mass="43033">MATTLATDVRLSIAHQTRFALRLASTISSNPKSAASNAAFSPVSLHSALSLLAAGAGSATRDQLVATLGTGEVEGGHALAEQVVQFVLADASSAGGPRVAFANGVFVDASLLLKPSFQELAVCKYKAETQSVDFQTKAAEVTTQVNSWVEKVTSGRIKNILPSGSVDNTTKLVLANALYFKGAWTDQFDSYGTKNDYFYLLDGSSVQTPFMSSMDDDQYISSSDGLKVLKLPYKQGGDNRQFSMYILLPEAPGGLSSLAEKLSAEPDFLERHIPRQRVAIRQFKLPKFKISFGMEASDLLKCLGLQLPFSDEADFSEMVDSPMPQGLRVSSVFHQAFVEVNEQGTEAAASTAIKMVPQQARPPSVMDFIADHPFLFLLREDISGVVLFMGHVVNPLLSS</sequence>
<organism>
    <name type="scientific">Triticum aestivum</name>
    <name type="common">Wheat</name>
    <dbReference type="NCBI Taxonomy" id="4565"/>
    <lineage>
        <taxon>Eukaryota</taxon>
        <taxon>Viridiplantae</taxon>
        <taxon>Streptophyta</taxon>
        <taxon>Embryophyta</taxon>
        <taxon>Tracheophyta</taxon>
        <taxon>Spermatophyta</taxon>
        <taxon>Magnoliopsida</taxon>
        <taxon>Liliopsida</taxon>
        <taxon>Poales</taxon>
        <taxon>Poaceae</taxon>
        <taxon>BOP clade</taxon>
        <taxon>Pooideae</taxon>
        <taxon>Triticodae</taxon>
        <taxon>Triticeae</taxon>
        <taxon>Triticinae</taxon>
        <taxon>Triticum</taxon>
    </lineage>
</organism>